<accession>A4W070</accession>
<sequence length="163" mass="18463">MPIVLLGFMGVGKTTTAHLLNLPVYDMDHIIEERIGMPIADYFSLEGEASFRQLETEVLKGLLDLPSNCIVSTGGGVIKSEVNRELLLANREDNVLLTASFEVSYQRIRKDRQSQRPLFLQCSKEEFEALYRERMALYQGLADTVIDTDKLIPEQVARKILCK</sequence>
<name>AROK_STRS2</name>
<dbReference type="EC" id="2.7.1.71" evidence="1"/>
<dbReference type="EMBL" id="CP000408">
    <property type="protein sequence ID" value="ABP91759.1"/>
    <property type="molecule type" value="Genomic_DNA"/>
</dbReference>
<dbReference type="SMR" id="A4W070"/>
<dbReference type="KEGG" id="ssv:SSU98_0601"/>
<dbReference type="HOGENOM" id="CLU_057607_4_3_9"/>
<dbReference type="UniPathway" id="UPA00053">
    <property type="reaction ID" value="UER00088"/>
</dbReference>
<dbReference type="GO" id="GO:0005829">
    <property type="term" value="C:cytosol"/>
    <property type="evidence" value="ECO:0007669"/>
    <property type="project" value="TreeGrafter"/>
</dbReference>
<dbReference type="GO" id="GO:0005524">
    <property type="term" value="F:ATP binding"/>
    <property type="evidence" value="ECO:0007669"/>
    <property type="project" value="UniProtKB-UniRule"/>
</dbReference>
<dbReference type="GO" id="GO:0000287">
    <property type="term" value="F:magnesium ion binding"/>
    <property type="evidence" value="ECO:0007669"/>
    <property type="project" value="UniProtKB-UniRule"/>
</dbReference>
<dbReference type="GO" id="GO:0004765">
    <property type="term" value="F:shikimate kinase activity"/>
    <property type="evidence" value="ECO:0007669"/>
    <property type="project" value="UniProtKB-UniRule"/>
</dbReference>
<dbReference type="GO" id="GO:0008652">
    <property type="term" value="P:amino acid biosynthetic process"/>
    <property type="evidence" value="ECO:0007669"/>
    <property type="project" value="UniProtKB-KW"/>
</dbReference>
<dbReference type="GO" id="GO:0009073">
    <property type="term" value="P:aromatic amino acid family biosynthetic process"/>
    <property type="evidence" value="ECO:0007669"/>
    <property type="project" value="UniProtKB-KW"/>
</dbReference>
<dbReference type="GO" id="GO:0009423">
    <property type="term" value="P:chorismate biosynthetic process"/>
    <property type="evidence" value="ECO:0007669"/>
    <property type="project" value="UniProtKB-UniRule"/>
</dbReference>
<dbReference type="CDD" id="cd00464">
    <property type="entry name" value="SK"/>
    <property type="match status" value="1"/>
</dbReference>
<dbReference type="Gene3D" id="3.40.50.300">
    <property type="entry name" value="P-loop containing nucleotide triphosphate hydrolases"/>
    <property type="match status" value="1"/>
</dbReference>
<dbReference type="HAMAP" id="MF_00109">
    <property type="entry name" value="Shikimate_kinase"/>
    <property type="match status" value="1"/>
</dbReference>
<dbReference type="InterPro" id="IPR027417">
    <property type="entry name" value="P-loop_NTPase"/>
</dbReference>
<dbReference type="InterPro" id="IPR031322">
    <property type="entry name" value="Shikimate/glucono_kinase"/>
</dbReference>
<dbReference type="InterPro" id="IPR000623">
    <property type="entry name" value="Shikimate_kinase/TSH1"/>
</dbReference>
<dbReference type="InterPro" id="IPR023000">
    <property type="entry name" value="Shikimate_kinase_CS"/>
</dbReference>
<dbReference type="PANTHER" id="PTHR21087">
    <property type="entry name" value="SHIKIMATE KINASE"/>
    <property type="match status" value="1"/>
</dbReference>
<dbReference type="PANTHER" id="PTHR21087:SF16">
    <property type="entry name" value="SHIKIMATE KINASE 1, CHLOROPLASTIC"/>
    <property type="match status" value="1"/>
</dbReference>
<dbReference type="Pfam" id="PF01202">
    <property type="entry name" value="SKI"/>
    <property type="match status" value="1"/>
</dbReference>
<dbReference type="PRINTS" id="PR01100">
    <property type="entry name" value="SHIKIMTKNASE"/>
</dbReference>
<dbReference type="SUPFAM" id="SSF52540">
    <property type="entry name" value="P-loop containing nucleoside triphosphate hydrolases"/>
    <property type="match status" value="1"/>
</dbReference>
<dbReference type="PROSITE" id="PS01128">
    <property type="entry name" value="SHIKIMATE_KINASE"/>
    <property type="match status" value="1"/>
</dbReference>
<gene>
    <name evidence="1" type="primary">aroK</name>
    <name type="ordered locus">SSU98_0601</name>
</gene>
<organism>
    <name type="scientific">Streptococcus suis (strain 98HAH33)</name>
    <dbReference type="NCBI Taxonomy" id="391296"/>
    <lineage>
        <taxon>Bacteria</taxon>
        <taxon>Bacillati</taxon>
        <taxon>Bacillota</taxon>
        <taxon>Bacilli</taxon>
        <taxon>Lactobacillales</taxon>
        <taxon>Streptococcaceae</taxon>
        <taxon>Streptococcus</taxon>
    </lineage>
</organism>
<comment type="function">
    <text evidence="1">Catalyzes the specific phosphorylation of the 3-hydroxyl group of shikimic acid using ATP as a cosubstrate.</text>
</comment>
<comment type="catalytic activity">
    <reaction evidence="1">
        <text>shikimate + ATP = 3-phosphoshikimate + ADP + H(+)</text>
        <dbReference type="Rhea" id="RHEA:13121"/>
        <dbReference type="ChEBI" id="CHEBI:15378"/>
        <dbReference type="ChEBI" id="CHEBI:30616"/>
        <dbReference type="ChEBI" id="CHEBI:36208"/>
        <dbReference type="ChEBI" id="CHEBI:145989"/>
        <dbReference type="ChEBI" id="CHEBI:456216"/>
        <dbReference type="EC" id="2.7.1.71"/>
    </reaction>
</comment>
<comment type="cofactor">
    <cofactor evidence="1">
        <name>Mg(2+)</name>
        <dbReference type="ChEBI" id="CHEBI:18420"/>
    </cofactor>
    <text evidence="1">Binds 1 Mg(2+) ion per subunit.</text>
</comment>
<comment type="pathway">
    <text evidence="1">Metabolic intermediate biosynthesis; chorismate biosynthesis; chorismate from D-erythrose 4-phosphate and phosphoenolpyruvate: step 5/7.</text>
</comment>
<comment type="subunit">
    <text evidence="1">Monomer.</text>
</comment>
<comment type="subcellular location">
    <subcellularLocation>
        <location evidence="1">Cytoplasm</location>
    </subcellularLocation>
</comment>
<comment type="similarity">
    <text evidence="1">Belongs to the shikimate kinase family.</text>
</comment>
<feature type="chain" id="PRO_1000094425" description="Shikimate kinase">
    <location>
        <begin position="1"/>
        <end position="163"/>
    </location>
</feature>
<feature type="binding site" evidence="1">
    <location>
        <begin position="10"/>
        <end position="15"/>
    </location>
    <ligand>
        <name>ATP</name>
        <dbReference type="ChEBI" id="CHEBI:30616"/>
    </ligand>
</feature>
<feature type="binding site" evidence="1">
    <location>
        <position position="14"/>
    </location>
    <ligand>
        <name>Mg(2+)</name>
        <dbReference type="ChEBI" id="CHEBI:18420"/>
    </ligand>
</feature>
<feature type="binding site" evidence="1">
    <location>
        <position position="28"/>
    </location>
    <ligand>
        <name>substrate</name>
    </ligand>
</feature>
<feature type="binding site" evidence="1">
    <location>
        <position position="52"/>
    </location>
    <ligand>
        <name>substrate</name>
    </ligand>
</feature>
<feature type="binding site" evidence="1">
    <location>
        <position position="75"/>
    </location>
    <ligand>
        <name>substrate</name>
    </ligand>
</feature>
<feature type="binding site" evidence="1">
    <location>
        <position position="116"/>
    </location>
    <ligand>
        <name>ATP</name>
        <dbReference type="ChEBI" id="CHEBI:30616"/>
    </ligand>
</feature>
<feature type="binding site" evidence="1">
    <location>
        <position position="134"/>
    </location>
    <ligand>
        <name>substrate</name>
    </ligand>
</feature>
<reference key="1">
    <citation type="journal article" date="2007" name="PLoS ONE">
        <title>A glimpse of streptococcal toxic shock syndrome from comparative genomics of S. suis 2 Chinese isolates.</title>
        <authorList>
            <person name="Chen C."/>
            <person name="Tang J."/>
            <person name="Dong W."/>
            <person name="Wang C."/>
            <person name="Feng Y."/>
            <person name="Wang J."/>
            <person name="Zheng F."/>
            <person name="Pan X."/>
            <person name="Liu D."/>
            <person name="Li M."/>
            <person name="Song Y."/>
            <person name="Zhu X."/>
            <person name="Sun H."/>
            <person name="Feng T."/>
            <person name="Guo Z."/>
            <person name="Ju A."/>
            <person name="Ge J."/>
            <person name="Dong Y."/>
            <person name="Sun W."/>
            <person name="Jiang Y."/>
            <person name="Wang J."/>
            <person name="Yan J."/>
            <person name="Yang H."/>
            <person name="Wang X."/>
            <person name="Gao G.F."/>
            <person name="Yang R."/>
            <person name="Wang J."/>
            <person name="Yu J."/>
        </authorList>
    </citation>
    <scope>NUCLEOTIDE SEQUENCE [LARGE SCALE GENOMIC DNA]</scope>
    <source>
        <strain>98HAH33</strain>
    </source>
</reference>
<evidence type="ECO:0000255" key="1">
    <source>
        <dbReference type="HAMAP-Rule" id="MF_00109"/>
    </source>
</evidence>
<protein>
    <recommendedName>
        <fullName evidence="1">Shikimate kinase</fullName>
        <shortName evidence="1">SK</shortName>
        <ecNumber evidence="1">2.7.1.71</ecNumber>
    </recommendedName>
</protein>
<keyword id="KW-0028">Amino-acid biosynthesis</keyword>
<keyword id="KW-0057">Aromatic amino acid biosynthesis</keyword>
<keyword id="KW-0067">ATP-binding</keyword>
<keyword id="KW-0963">Cytoplasm</keyword>
<keyword id="KW-0418">Kinase</keyword>
<keyword id="KW-0460">Magnesium</keyword>
<keyword id="KW-0479">Metal-binding</keyword>
<keyword id="KW-0547">Nucleotide-binding</keyword>
<keyword id="KW-0808">Transferase</keyword>
<proteinExistence type="inferred from homology"/>